<evidence type="ECO:0000255" key="1">
    <source>
        <dbReference type="HAMAP-Rule" id="MF_00523"/>
    </source>
</evidence>
<feature type="chain" id="PRO_0000059664" description="UDP-3-O-acylglucosamine N-acyltransferase">
    <location>
        <begin position="1"/>
        <end position="353"/>
    </location>
</feature>
<feature type="active site" description="Proton acceptor" evidence="1">
    <location>
        <position position="246"/>
    </location>
</feature>
<gene>
    <name evidence="1" type="primary">lpxD</name>
    <name type="ordered locus">CT1360</name>
</gene>
<sequence>MKIADIKAFLGRYFDPVELVGTGDIEIVGPAKIEEASTGHVSFVANEKYYRYIAQTGASLVIVSQKAPLDDASPGTSFLKVADPYTAFVFILQHFSGKRRIADTGIAASASVAASVRLGENVSLGEHVVIGENCVIGDGTVIGPGTVLMDGVTVGSGCTIFPLVTIYDGTVIGDRVTIHSGTVVGADGFGFAPQKDGSYIKIPQMGTVEIGDDVEIGANTTIDRATMGATVIEKGAKIDNLVQIAHNCRIGGDTVIASQAGISGSVKIGRQCLIGGQAGFAGHLELADRTSVAAKAGISKSFLEPGLAIRGVPAQPMRDQLRQEAQVRGLGEMKSKLEALEAKLLALQQQLGE</sequence>
<name>LPXD_CHLTE</name>
<proteinExistence type="inferred from homology"/>
<organism>
    <name type="scientific">Chlorobaculum tepidum (strain ATCC 49652 / DSM 12025 / NBRC 103806 / TLS)</name>
    <name type="common">Chlorobium tepidum</name>
    <dbReference type="NCBI Taxonomy" id="194439"/>
    <lineage>
        <taxon>Bacteria</taxon>
        <taxon>Pseudomonadati</taxon>
        <taxon>Chlorobiota</taxon>
        <taxon>Chlorobiia</taxon>
        <taxon>Chlorobiales</taxon>
        <taxon>Chlorobiaceae</taxon>
        <taxon>Chlorobaculum</taxon>
    </lineage>
</organism>
<reference key="1">
    <citation type="journal article" date="2002" name="Proc. Natl. Acad. Sci. U.S.A.">
        <title>The complete genome sequence of Chlorobium tepidum TLS, a photosynthetic, anaerobic, green-sulfur bacterium.</title>
        <authorList>
            <person name="Eisen J.A."/>
            <person name="Nelson K.E."/>
            <person name="Paulsen I.T."/>
            <person name="Heidelberg J.F."/>
            <person name="Wu M."/>
            <person name="Dodson R.J."/>
            <person name="DeBoy R.T."/>
            <person name="Gwinn M.L."/>
            <person name="Nelson W.C."/>
            <person name="Haft D.H."/>
            <person name="Hickey E.K."/>
            <person name="Peterson J.D."/>
            <person name="Durkin A.S."/>
            <person name="Kolonay J.F."/>
            <person name="Yang F."/>
            <person name="Holt I.E."/>
            <person name="Umayam L.A."/>
            <person name="Mason T.M."/>
            <person name="Brenner M."/>
            <person name="Shea T.P."/>
            <person name="Parksey D.S."/>
            <person name="Nierman W.C."/>
            <person name="Feldblyum T.V."/>
            <person name="Hansen C.L."/>
            <person name="Craven M.B."/>
            <person name="Radune D."/>
            <person name="Vamathevan J.J."/>
            <person name="Khouri H.M."/>
            <person name="White O."/>
            <person name="Gruber T.M."/>
            <person name="Ketchum K.A."/>
            <person name="Venter J.C."/>
            <person name="Tettelin H."/>
            <person name="Bryant D.A."/>
            <person name="Fraser C.M."/>
        </authorList>
    </citation>
    <scope>NUCLEOTIDE SEQUENCE [LARGE SCALE GENOMIC DNA]</scope>
    <source>
        <strain>ATCC 49652 / DSM 12025 / NBRC 103806 / TLS</strain>
    </source>
</reference>
<protein>
    <recommendedName>
        <fullName evidence="1">UDP-3-O-acylglucosamine N-acyltransferase</fullName>
        <ecNumber evidence="1">2.3.1.191</ecNumber>
    </recommendedName>
</protein>
<dbReference type="EC" id="2.3.1.191" evidence="1"/>
<dbReference type="EMBL" id="AE006470">
    <property type="protein sequence ID" value="AAM72589.1"/>
    <property type="molecule type" value="Genomic_DNA"/>
</dbReference>
<dbReference type="RefSeq" id="NP_662247.1">
    <property type="nucleotide sequence ID" value="NC_002932.3"/>
</dbReference>
<dbReference type="RefSeq" id="WP_010933028.1">
    <property type="nucleotide sequence ID" value="NC_002932.3"/>
</dbReference>
<dbReference type="SMR" id="Q8KCQ3"/>
<dbReference type="STRING" id="194439.CT1360"/>
<dbReference type="EnsemblBacteria" id="AAM72589">
    <property type="protein sequence ID" value="AAM72589"/>
    <property type="gene ID" value="CT1360"/>
</dbReference>
<dbReference type="KEGG" id="cte:CT1360"/>
<dbReference type="PATRIC" id="fig|194439.7.peg.1238"/>
<dbReference type="eggNOG" id="COG1044">
    <property type="taxonomic scope" value="Bacteria"/>
</dbReference>
<dbReference type="HOGENOM" id="CLU_049865_0_0_10"/>
<dbReference type="OrthoDB" id="9784739at2"/>
<dbReference type="UniPathway" id="UPA00973"/>
<dbReference type="Proteomes" id="UP000001007">
    <property type="component" value="Chromosome"/>
</dbReference>
<dbReference type="GO" id="GO:0016020">
    <property type="term" value="C:membrane"/>
    <property type="evidence" value="ECO:0007669"/>
    <property type="project" value="GOC"/>
</dbReference>
<dbReference type="GO" id="GO:0016410">
    <property type="term" value="F:N-acyltransferase activity"/>
    <property type="evidence" value="ECO:0007669"/>
    <property type="project" value="InterPro"/>
</dbReference>
<dbReference type="GO" id="GO:0009245">
    <property type="term" value="P:lipid A biosynthetic process"/>
    <property type="evidence" value="ECO:0007669"/>
    <property type="project" value="UniProtKB-UniRule"/>
</dbReference>
<dbReference type="CDD" id="cd03352">
    <property type="entry name" value="LbH_LpxD"/>
    <property type="match status" value="1"/>
</dbReference>
<dbReference type="Gene3D" id="2.160.10.10">
    <property type="entry name" value="Hexapeptide repeat proteins"/>
    <property type="match status" value="1"/>
</dbReference>
<dbReference type="Gene3D" id="3.40.1390.10">
    <property type="entry name" value="MurE/MurF, N-terminal domain"/>
    <property type="match status" value="1"/>
</dbReference>
<dbReference type="HAMAP" id="MF_00523">
    <property type="entry name" value="LpxD"/>
    <property type="match status" value="1"/>
</dbReference>
<dbReference type="InterPro" id="IPR001451">
    <property type="entry name" value="Hexapep"/>
</dbReference>
<dbReference type="InterPro" id="IPR018357">
    <property type="entry name" value="Hexapep_transf_CS"/>
</dbReference>
<dbReference type="InterPro" id="IPR007691">
    <property type="entry name" value="LpxD"/>
</dbReference>
<dbReference type="InterPro" id="IPR011004">
    <property type="entry name" value="Trimer_LpxA-like_sf"/>
</dbReference>
<dbReference type="InterPro" id="IPR020573">
    <property type="entry name" value="UDP_GlcNAc_AcTrfase_non-rep"/>
</dbReference>
<dbReference type="NCBIfam" id="TIGR01853">
    <property type="entry name" value="lipid_A_lpxD"/>
    <property type="match status" value="1"/>
</dbReference>
<dbReference type="NCBIfam" id="NF002060">
    <property type="entry name" value="PRK00892.1"/>
    <property type="match status" value="1"/>
</dbReference>
<dbReference type="PANTHER" id="PTHR43378">
    <property type="entry name" value="UDP-3-O-ACYLGLUCOSAMINE N-ACYLTRANSFERASE"/>
    <property type="match status" value="1"/>
</dbReference>
<dbReference type="PANTHER" id="PTHR43378:SF2">
    <property type="entry name" value="UDP-3-O-ACYLGLUCOSAMINE N-ACYLTRANSFERASE 1, MITOCHONDRIAL-RELATED"/>
    <property type="match status" value="1"/>
</dbReference>
<dbReference type="Pfam" id="PF00132">
    <property type="entry name" value="Hexapep"/>
    <property type="match status" value="2"/>
</dbReference>
<dbReference type="Pfam" id="PF04613">
    <property type="entry name" value="LpxD"/>
    <property type="match status" value="1"/>
</dbReference>
<dbReference type="SUPFAM" id="SSF51161">
    <property type="entry name" value="Trimeric LpxA-like enzymes"/>
    <property type="match status" value="1"/>
</dbReference>
<dbReference type="PROSITE" id="PS00101">
    <property type="entry name" value="HEXAPEP_TRANSFERASES"/>
    <property type="match status" value="2"/>
</dbReference>
<keyword id="KW-0012">Acyltransferase</keyword>
<keyword id="KW-0441">Lipid A biosynthesis</keyword>
<keyword id="KW-0444">Lipid biosynthesis</keyword>
<keyword id="KW-0443">Lipid metabolism</keyword>
<keyword id="KW-1185">Reference proteome</keyword>
<keyword id="KW-0677">Repeat</keyword>
<keyword id="KW-0808">Transferase</keyword>
<accession>Q8KCQ3</accession>
<comment type="function">
    <text evidence="1">Catalyzes the N-acylation of UDP-3-O-acylglucosamine using 3-hydroxyacyl-ACP as the acyl donor. Is involved in the biosynthesis of lipid A, a phosphorylated glycolipid that anchors the lipopolysaccharide to the outer membrane of the cell.</text>
</comment>
<comment type="catalytic activity">
    <reaction evidence="1">
        <text>a UDP-3-O-[(3R)-3-hydroxyacyl]-alpha-D-glucosamine + a (3R)-hydroxyacyl-[ACP] = a UDP-2-N,3-O-bis[(3R)-3-hydroxyacyl]-alpha-D-glucosamine + holo-[ACP] + H(+)</text>
        <dbReference type="Rhea" id="RHEA:53836"/>
        <dbReference type="Rhea" id="RHEA-COMP:9685"/>
        <dbReference type="Rhea" id="RHEA-COMP:9945"/>
        <dbReference type="ChEBI" id="CHEBI:15378"/>
        <dbReference type="ChEBI" id="CHEBI:64479"/>
        <dbReference type="ChEBI" id="CHEBI:78827"/>
        <dbReference type="ChEBI" id="CHEBI:137740"/>
        <dbReference type="ChEBI" id="CHEBI:137748"/>
        <dbReference type="EC" id="2.3.1.191"/>
    </reaction>
</comment>
<comment type="pathway">
    <text evidence="1">Bacterial outer membrane biogenesis; LPS lipid A biosynthesis.</text>
</comment>
<comment type="subunit">
    <text evidence="1">Homotrimer.</text>
</comment>
<comment type="similarity">
    <text evidence="1">Belongs to the transferase hexapeptide repeat family. LpxD subfamily.</text>
</comment>